<evidence type="ECO:0000250" key="1">
    <source>
        <dbReference type="UniProtKB" id="P22893"/>
    </source>
</evidence>
<evidence type="ECO:0000250" key="2">
    <source>
        <dbReference type="UniProtKB" id="P26651"/>
    </source>
</evidence>
<evidence type="ECO:0000255" key="3">
    <source>
        <dbReference type="PROSITE-ProRule" id="PRU00723"/>
    </source>
</evidence>
<evidence type="ECO:0000256" key="4">
    <source>
        <dbReference type="SAM" id="MobiDB-lite"/>
    </source>
</evidence>
<evidence type="ECO:0000269" key="5">
    <source>
    </source>
</evidence>
<evidence type="ECO:0000269" key="6">
    <source>
    </source>
</evidence>
<evidence type="ECO:0000303" key="7">
    <source>
    </source>
</evidence>
<evidence type="ECO:0000305" key="8"/>
<evidence type="ECO:0000312" key="9">
    <source>
        <dbReference type="RGD" id="620722"/>
    </source>
</evidence>
<sequence length="320" mass="33654">MDLSAIYESLMSMSHDLSPDHGGTESSGGLWNINSSDSIPSGVTSRLTGRSTSLVEGRSCSWVPPPPGFAPLAPRPGPELSPSPTSPTATPTTSSRYKTELCRTYSESGRCRYGAKCQFAHGPGELRQANRHPKYKTELCHKFYLQGRCPYGSRCHFIHNPTEDLALPGQPHVLRQSISFSGLPSGRRTSPPPPGFSGPSLSSCSFSPSSSPPPPGDLPLSPSAFSAAPGTPVSRRDPTPACCPSCRRSTTPSTIWGPLGGLARSPSAHSLGSDPDDYASSGSSLGGSDSPVFEAGVFGPPQPPAPPRRLPIFNRISVSE</sequence>
<reference key="1">
    <citation type="journal article" date="1992" name="Gene">
        <title>Sequence of a rat TIS11 cDNA, an immediate early gene induced by growth factors and phorbol esters.</title>
        <authorList>
            <person name="Kaneda N."/>
            <person name="Oshima M."/>
            <person name="Chung S.Y."/>
            <person name="Guroff G."/>
        </authorList>
    </citation>
    <scope>NUCLEOTIDE SEQUENCE [MRNA]</scope>
</reference>
<reference key="2">
    <citation type="journal article" date="2000" name="Mol. Cell. Biochem.">
        <title>Cloning and characterization of the rat TIS11 gene.</title>
        <authorList>
            <person name="Kaneda N."/>
            <person name="Murata T."/>
            <person name="Niimi Y."/>
            <person name="Minamiyama M."/>
        </authorList>
    </citation>
    <scope>NUCLEOTIDE SEQUENCE [GENOMIC DNA]</scope>
</reference>
<reference key="3">
    <citation type="journal article" date="2004" name="Genome Res.">
        <title>The status, quality, and expansion of the NIH full-length cDNA project: the Mammalian Gene Collection (MGC).</title>
        <authorList>
            <consortium name="The MGC Project Team"/>
        </authorList>
    </citation>
    <scope>NUCLEOTIDE SEQUENCE [LARGE SCALE MRNA]</scope>
    <source>
        <tissue>Pituitary</tissue>
    </source>
</reference>
<reference key="4">
    <citation type="journal article" date="2002" name="Biochem. Biophys. Res. Commun.">
        <title>Identification of nuclear import and export signals within the structure of the zinc finger protein TIS11.</title>
        <authorList>
            <person name="Murata T."/>
            <person name="Yoshino Y."/>
            <person name="Morita N."/>
            <person name="Kaneda N."/>
        </authorList>
    </citation>
    <scope>SUBCELLULAR LOCATION</scope>
    <scope>MUTAGENESIS OF LEU-3 AND LEU-10</scope>
    <scope>DOMAIN</scope>
</reference>
<reference key="5">
    <citation type="journal article" date="2016" name="Amino Acids">
        <title>Destabilization of the ornithine decarboxylase mRNA transcript by the RNA-binding protein tristetraprolin.</title>
        <authorList>
            <person name="Nowotarski S.L."/>
            <person name="Origanti S."/>
            <person name="Sass-Kuhn S."/>
            <person name="Shantz L.M."/>
        </authorList>
    </citation>
    <scope>RNA-BINDING</scope>
</reference>
<name>TTP_RAT</name>
<gene>
    <name evidence="9" type="primary">Zfp36</name>
    <name evidence="7" type="synonym">Tis11</name>
    <name evidence="2" type="synonym">Ttp</name>
</gene>
<comment type="function">
    <text evidence="1 2 6">Zinc-finger RNA-binding protein that destabilizes numerous cytoplasmic AU-rich element (ARE)-containing mRNA transcripts by promoting their poly(A) tail removal or deadenylation, and hence provide a mechanism for attenuating protein synthesis (PubMed:27193233). Acts as an 3'-untranslated region (UTR) ARE mRNA-binding adapter protein to communicate signaling events to the mRNA decay machinery. Recruits deadenylase CNOT7 (and probably the CCR4-NOT complex) via association with CNOT1, and hence promotes ARE-mediated mRNA deadenylation. Also functions by recruiting components of the cytoplasmic RNA decay machinery to the bound ARE-containing mRNAs. Self regulates by destabilizing its own mRNA (By similarity). Binds to 3'-UTR ARE of numerous mRNAs (PubMed:27193233). Also binds to ARE of its own mRNA. Plays a role in anti-inflammatory responses; suppresses tumor necrosis factor (TNF)-alpha production by stimulating ARE-mediated TNF-alpha mRNA decay and several other inflammatory ARE-containing mRNAs in interferon (IFN)- and/or lipopolysaccharide (LPS)-induced macrophages. Also plays a role in the regulation of dendritic cell maturation at the post-transcriptional level, and hence operates as part of a negative feedback loop to limit the inflammatory response. Promotes ARE-mediated mRNA decay of hypoxia-inducible factor HIF1A mRNA during the response of endothelial cells to hypoxia. Positively regulates early adipogenesis of preadipocytes by promoting ARE-mediated mRNA decay of immediate early genes (IEGs). Negatively regulates hematopoietic/erythroid cell differentiation by promoting ARE-mediated mRNA decay of the transcription factor STAT5B mRNA. Plays a role in maintaining skeletal muscle satellite cell quiescence by promoting ARE-mediated mRNA decay of the myogenic determination factor MYOD1 mRNA. Also associates with and regulates the expression of non-ARE-containing target mRNAs at the post-transcriptional level, such as MHC class I mRNAs. Participates in association with argonaute RISC catalytic components in the ARE-mediated mRNA decay mechanism; assists microRNA (miRNA) targeting ARE-containing mRNAs. May also play a role in the regulation of cytoplasmic mRNA decapping; enhances decapping of ARE-containing RNAs, in vitro. Involved in the delivery of target ARE-mRNAs to processing bodies (PBs). In addition to its cytosolic mRNA-decay function, affects nuclear pre-mRNA processing. Negatively regulates nuclear poly(A)-binding protein PABPN1-stimulated polyadenylation activity on ARE-containing pre-mRNA during LPS-stimulated macrophages. Also involved in the regulation of stress granule (SG) and P-body (PB) formation and fusion. Plays a role in the regulation of keratinocyte proliferation, differentiation and apoptosis. Plays a role as a tumor suppressor by inhibiting cell proliferation in breast cancer cells (By similarity).</text>
</comment>
<comment type="subunit">
    <text evidence="1 2">Associates with cytoplasmic CCR4-NOT and PAN2-PAN3 deadenylase complexes to trigger ARE-containing mRNA deadenylation and decay processes. Part of a mRNA decay activation complex at least composed of poly(A)-specific exoribonucleases CNOT6, EXOSC2 and XRN1 and mRNA-decapping enzymes DCP1A and DCP2. Associates with the RNA exosome complex. Interacts (via phosphorylated form) with 14-3-3 proteins; these interactions promote exclusion of ZFP36 from cytoplasmic stress granules in response to arsenite treatment in a MAPKAPK2-dependent manner and does not prevent CCR4-NOT deadenylase complex recruitment or ZFP36-induced ARE-containing mRNA deadenylation and decay processes. Interacts with 14-3-3 proteins; these interactions occur in response to rapamycin in an Akt-dependent manner. Interacts with AGO2 and AGO4. Interacts (via C-terminus) with CNOT1; this interaction occurs in a RNA-independent manner and induces mRNA deadenylation. Interacts (via N-terminus) with CNOT6. Interacts with CNOT6L. Interacts (via C-terminus) with CNOT7; this interaction occurs in a RNA-independent manner, induces mRNA deadenylation and is inhibited in a phosphorylation MAPKAPK2-dependent manner. Interacts (via unphosphorylated form) with CNOT8; this interaction occurs in a RNA-independent manner and is inhibited in a phosphorylation MAPKAPK2-dependent manner. Interacts with DCP1A. Interacts (via N-terminus) with DCP2. Interacts with EDC3. Interacts (via N-terminus) with EXOSC2. Interacts with heat shock 70 kDa proteins. Interacts with KHSRP; this interaction increases upon cytokine-induced treatment. Interacts with MAP3K4; this interaction enhances the association with SH3KBP1/CIN85. Interacts with MAPKAPK2; this interaction occurs upon skeletal muscle satellite cell activation. Interacts with NCL. Interacts with NUP214; this interaction increases upon lipopolysaccharide (LPS) stimulation. Interacts with PABPC1; this interaction occurs in a RNA-dependent manner. Interacts (via hypophosphorylated form) with PABPN1 (via RRM domain and C-terminal arginine-rich region); this interaction occurs in the nucleus in a RNA-independent manner, decreases in presence of single-stranded poly(A) RNA-oligomer and in a p38 MAPK-dependent-manner and inhibits nuclear poly(A) tail synthesis. Interacts with PAN2. Interacts (via C3H1-type zinc finger domains) with PKM. Interacts (via C3H1-type zinc finger domains) with nuclear RNA poly(A) polymerase. Interacts with PPP2CA; this interaction occurs in LPS-stimulated cells and induces ZFP36 dephosphorylation, and hence may promote ARE-containing mRNAs decay. Interacts (via C-terminus) with PRR5L (via C-terminus); this interaction may accelerate ZFP36-mediated mRNA decay during stress. Interacts (via C-terminus) with SFN; this interaction occurs in a phosphorylation-dependent manner. Interacts (via extreme C-terminal region) with SH3KBP1/CIN85 (via SH3 domains); this interaction enhances MAP3K4-induced phosphorylation of ZFP36 at Ser-59 and Ser-86 and does not alter neither ZFP36 binding to ARE-containing transcripts nor TNF-alpha mRNA decay. Interacts with XRN1. Interacts (via C-terminus and Ser-179 phosphorylated form) with YWHAB; this interaction occurs in a p38/MAPKAPK2-dependent manner, increases cytoplasmic localization of ZFP36 and protects ZFP36 from Ser-179 dephosphorylation by serine/threonine phosphatase 2A, and hence may be crucial for stabilizing ARE-containing mRNAs. Interacts (via phosphorylated form) with YWHAE. Interacts (via C-terminus) with YWHAG; this interaction occurs in a phosphorylation-dependent manner. Interacts with YWHAH; this interaction occurs in a phosphorylation-dependent manner. Interacts with YWHAQ; this interaction occurs in a phosphorylation-dependent manner. Interacts with (via C-terminus) YWHAZ; this interaction occurs in a phosphorylation-dependent manner. Does not interact with SH3KBP1. Interacts (via P-P-P-P-G repeats) with GIGYF2; the interaction is direct (By similarity).</text>
</comment>
<comment type="subcellular location">
    <subcellularLocation>
        <location evidence="5">Nucleus</location>
    </subcellularLocation>
    <subcellularLocation>
        <location evidence="5">Cytoplasm</location>
    </subcellularLocation>
    <subcellularLocation>
        <location evidence="1">Cytoplasmic granule</location>
    </subcellularLocation>
    <subcellularLocation>
        <location evidence="1">Cytoplasm</location>
        <location evidence="1">P-body</location>
    </subcellularLocation>
    <text evidence="1 2 5">Shuttles between nucleus and cytoplasm in a CRM1-dependent manner (PubMed:12054509). Localized predominantly in the cytoplasm in a p38 MAPK- and YWHAB-dependent manner. Colocalizes with SH3KBP1 and MAP3K4 in the cytoplasm. Component of cytoplasmic stress granules (SGs). Localizes to cytoplasmic stress granules upon energy starvation. Localizes in processing bodies (PBs). Excluded from stress granules in a phosphorylation MAPKAPK2-dependent manner. Shuttles in and out of both cytoplasmic P-body and SGs (By similarity).</text>
</comment>
<comment type="domain">
    <text evidence="2">The C3H1-type zinc finger domains are necessary for ARE-binding activity.</text>
</comment>
<comment type="PTM">
    <text evidence="1 2">Phosphorylated. Phosphorylation at serine and/or threonine residues occurs in a p38 MAPK- and MAPKAPK2-dependent manner. Phosphorylated by MAPKAPK2 at Ser-53 and Ser-179; phosphorylation increases its stability and cytoplasmic localization, promotes binding to 14-3-3 adapter proteins and inhibits the recruitment of cytoplasmic CCR4-NOT and PAN2-PAN3 deadenylase complexes to the mRNA decay machinery, thereby inhibiting ZFP36-induced ARE-containing mRNA deadenylation and decay processes. Phosphorylation by MAPKAPK2 does not impair ARE-containing RNA-binding. Phosphorylated in a MAPKAPK2- and p38 MAPK-dependent manner upon skeletal muscle satellite cell activation; this phosphorylation inhibits ZFP36-mediated mRNA decay activity, and hence stabilizes MYOD1 mRNA. Phosphorylated by MAPK1 upon mitogen stimulation. Phosphorylated at Ser-59 and Ser-86; these phosphorylations increase in a SH3KBP1-dependent manner. Phosphorylated at serine and threonine residues in a pyruvate kinase PKM- and p38 MAPK-dependent manner. Phosphorylation at Ser-53 may participate in the PKM-mediated degradation of ZFP36 in a p38 MAPK-dependent manner. Dephosphorylated by serine/threonine phosphatase 2A at Ser-179.</text>
</comment>
<comment type="PTM">
    <text evidence="2">Ubiquitinated; pyruvate kinase (PKM)-dependent ubiquitination leads to proteasomal degradation through a p38 MAPK signaling pathway.</text>
</comment>
<proteinExistence type="evidence at protein level"/>
<accession>P47973</accession>
<accession>Q54AH1</accession>
<keyword id="KW-0963">Cytoplasm</keyword>
<keyword id="KW-0217">Developmental protein</keyword>
<keyword id="KW-0238">DNA-binding</keyword>
<keyword id="KW-0271">Exosome</keyword>
<keyword id="KW-0479">Metal-binding</keyword>
<keyword id="KW-0509">mRNA transport</keyword>
<keyword id="KW-0539">Nucleus</keyword>
<keyword id="KW-0597">Phosphoprotein</keyword>
<keyword id="KW-1185">Reference proteome</keyword>
<keyword id="KW-0677">Repeat</keyword>
<keyword id="KW-0687">Ribonucleoprotein</keyword>
<keyword id="KW-0813">Transport</keyword>
<keyword id="KW-0832">Ubl conjugation</keyword>
<keyword id="KW-0862">Zinc</keyword>
<keyword id="KW-0863">Zinc-finger</keyword>
<organism>
    <name type="scientific">Rattus norvegicus</name>
    <name type="common">Rat</name>
    <dbReference type="NCBI Taxonomy" id="10116"/>
    <lineage>
        <taxon>Eukaryota</taxon>
        <taxon>Metazoa</taxon>
        <taxon>Chordata</taxon>
        <taxon>Craniata</taxon>
        <taxon>Vertebrata</taxon>
        <taxon>Euteleostomi</taxon>
        <taxon>Mammalia</taxon>
        <taxon>Eutheria</taxon>
        <taxon>Euarchontoglires</taxon>
        <taxon>Glires</taxon>
        <taxon>Rodentia</taxon>
        <taxon>Myomorpha</taxon>
        <taxon>Muroidea</taxon>
        <taxon>Muridae</taxon>
        <taxon>Murinae</taxon>
        <taxon>Rattus</taxon>
    </lineage>
</organism>
<feature type="chain" id="PRO_0000089165" description="mRNA decay activator protein ZFP36">
    <location>
        <begin position="1"/>
        <end position="320"/>
    </location>
</feature>
<feature type="repeat" description="P-P-P-P-G">
    <location>
        <begin position="64"/>
        <end position="68"/>
    </location>
</feature>
<feature type="repeat" description="P-P-P-P-G">
    <location>
        <begin position="191"/>
        <end position="195"/>
    </location>
</feature>
<feature type="repeat" description="P-P-P-P-G">
    <location>
        <begin position="212"/>
        <end position="216"/>
    </location>
</feature>
<feature type="zinc finger region" description="C3H1-type 1" evidence="3">
    <location>
        <begin position="96"/>
        <end position="124"/>
    </location>
</feature>
<feature type="zinc finger region" description="C3H1-type 2" evidence="3">
    <location>
        <begin position="134"/>
        <end position="162"/>
    </location>
</feature>
<feature type="region of interest" description="Necessary for localization of ARE-containing mRNAs to processing bodies (PBs)" evidence="2">
    <location>
        <begin position="1"/>
        <end position="167"/>
    </location>
</feature>
<feature type="region of interest" description="Necessary and sufficient for the association with mRNA decay enzymes and mRNA decay activation" evidence="2">
    <location>
        <begin position="1"/>
        <end position="93"/>
    </location>
</feature>
<feature type="region of interest" description="Necessary for nuclear export" evidence="5">
    <location>
        <begin position="1"/>
        <end position="15"/>
    </location>
</feature>
<feature type="region of interest" description="Disordered" evidence="4">
    <location>
        <begin position="17"/>
        <end position="50"/>
    </location>
</feature>
<feature type="region of interest" description="Disordered" evidence="4">
    <location>
        <begin position="66"/>
        <end position="95"/>
    </location>
</feature>
<feature type="region of interest" description="Necessary for nuclear localization" evidence="5">
    <location>
        <begin position="88"/>
        <end position="161"/>
    </location>
</feature>
<feature type="region of interest" description="Necessary for RNA-binding" evidence="2">
    <location>
        <begin position="90"/>
        <end position="166"/>
    </location>
</feature>
<feature type="region of interest" description="Necessary for localization of ARE-containing mRNAs to processing bodies (PBs)" evidence="2">
    <location>
        <begin position="93"/>
        <end position="320"/>
    </location>
</feature>
<feature type="region of interest" description="Necessary for interaction with PABPN1" evidence="1">
    <location>
        <begin position="96"/>
        <end position="187"/>
    </location>
</feature>
<feature type="region of interest" description="Necessary for mRNA decay activation" evidence="2">
    <location>
        <begin position="167"/>
        <end position="320"/>
    </location>
</feature>
<feature type="region of interest" description="Disordered" evidence="4">
    <location>
        <begin position="180"/>
        <end position="310"/>
    </location>
</feature>
<feature type="region of interest" description="Interaction with CNOT1" evidence="2">
    <location>
        <begin position="306"/>
        <end position="320"/>
    </location>
</feature>
<feature type="compositionally biased region" description="Polar residues" evidence="4">
    <location>
        <begin position="27"/>
        <end position="50"/>
    </location>
</feature>
<feature type="compositionally biased region" description="Pro residues" evidence="4">
    <location>
        <begin position="66"/>
        <end position="85"/>
    </location>
</feature>
<feature type="compositionally biased region" description="Low complexity" evidence="4">
    <location>
        <begin position="86"/>
        <end position="95"/>
    </location>
</feature>
<feature type="compositionally biased region" description="Low complexity" evidence="4">
    <location>
        <begin position="197"/>
        <end position="209"/>
    </location>
</feature>
<feature type="compositionally biased region" description="Low complexity" evidence="4">
    <location>
        <begin position="280"/>
        <end position="290"/>
    </location>
</feature>
<feature type="compositionally biased region" description="Pro residues" evidence="4">
    <location>
        <begin position="300"/>
        <end position="309"/>
    </location>
</feature>
<feature type="modified residue" description="Phosphoserine; by MAPKAPK2" evidence="1">
    <location>
        <position position="53"/>
    </location>
</feature>
<feature type="modified residue" description="Phosphoserine" evidence="2">
    <location>
        <position position="59"/>
    </location>
</feature>
<feature type="modified residue" description="Phosphoserine" evidence="2">
    <location>
        <position position="81"/>
    </location>
</feature>
<feature type="modified residue" description="Phosphoserine" evidence="1">
    <location>
        <position position="83"/>
    </location>
</feature>
<feature type="modified residue" description="Phosphothreonine" evidence="2">
    <location>
        <position position="85"/>
    </location>
</feature>
<feature type="modified residue" description="Phosphoserine" evidence="2">
    <location>
        <position position="86"/>
    </location>
</feature>
<feature type="modified residue" description="Phosphoserine; by MAPKAPK2" evidence="2">
    <location>
        <position position="179"/>
    </location>
</feature>
<feature type="modified residue" description="Phosphoserine" evidence="2">
    <location>
        <position position="190"/>
    </location>
</feature>
<feature type="modified residue" description="Phosphoserine" evidence="2">
    <location>
        <position position="211"/>
    </location>
</feature>
<feature type="modified residue" description="Phosphoserine; by MAPK1; in vitro" evidence="2">
    <location>
        <position position="221"/>
    </location>
</feature>
<feature type="modified residue" description="Phosphothreonine" evidence="1">
    <location>
        <position position="251"/>
    </location>
</feature>
<feature type="modified residue" description="Phosphoserine" evidence="2">
    <location>
        <position position="270"/>
    </location>
</feature>
<feature type="modified residue" description="Phosphoserine" evidence="2">
    <location>
        <position position="290"/>
    </location>
</feature>
<feature type="modified residue" description="Phosphoserine" evidence="2">
    <location>
        <position position="317"/>
    </location>
</feature>
<feature type="mutagenesis site" description="Inhibits nucleus export." evidence="5">
    <original>L</original>
    <variation>A</variation>
    <location>
        <position position="3"/>
    </location>
</feature>
<feature type="mutagenesis site" description="Inhibits nucleus export." evidence="5">
    <original>L</original>
    <variation>A</variation>
    <location>
        <position position="10"/>
    </location>
</feature>
<dbReference type="EMBL" id="X63369">
    <property type="protein sequence ID" value="CAA44970.1"/>
    <property type="molecule type" value="mRNA"/>
</dbReference>
<dbReference type="EMBL" id="AB025017">
    <property type="protein sequence ID" value="BAB12432.1"/>
    <property type="molecule type" value="Genomic_DNA"/>
</dbReference>
<dbReference type="EMBL" id="BC060308">
    <property type="protein sequence ID" value="AAH60308.1"/>
    <property type="molecule type" value="mRNA"/>
</dbReference>
<dbReference type="PIR" id="JC1255">
    <property type="entry name" value="JC1255"/>
</dbReference>
<dbReference type="RefSeq" id="NP_579824.2">
    <property type="nucleotide sequence ID" value="NM_133290.3"/>
</dbReference>
<dbReference type="SMR" id="P47973"/>
<dbReference type="FunCoup" id="P47973">
    <property type="interactions" value="174"/>
</dbReference>
<dbReference type="STRING" id="10116.ENSRNOP00000073413"/>
<dbReference type="GlyGen" id="P47973">
    <property type="glycosylation" value="1 site"/>
</dbReference>
<dbReference type="PhosphoSitePlus" id="P47973"/>
<dbReference type="PaxDb" id="10116-ENSRNOP00000026661"/>
<dbReference type="GeneID" id="79426"/>
<dbReference type="KEGG" id="rno:79426"/>
<dbReference type="UCSC" id="RGD:620722">
    <property type="organism name" value="rat"/>
</dbReference>
<dbReference type="AGR" id="RGD:620722"/>
<dbReference type="CTD" id="7538"/>
<dbReference type="RGD" id="620722">
    <property type="gene designation" value="Zfp36"/>
</dbReference>
<dbReference type="eggNOG" id="KOG1677">
    <property type="taxonomic scope" value="Eukaryota"/>
</dbReference>
<dbReference type="InParanoid" id="P47973"/>
<dbReference type="OrthoDB" id="410307at2759"/>
<dbReference type="PhylomeDB" id="P47973"/>
<dbReference type="Reactome" id="R-RNO-450513">
    <property type="pathway name" value="Tristetraprolin (TTP, ZFP36) binds and destabilizes mRNA"/>
</dbReference>
<dbReference type="PRO" id="PR:P47973"/>
<dbReference type="Proteomes" id="UP000002494">
    <property type="component" value="Unplaced"/>
</dbReference>
<dbReference type="GO" id="GO:0030014">
    <property type="term" value="C:CCR4-NOT complex"/>
    <property type="evidence" value="ECO:0000266"/>
    <property type="project" value="RGD"/>
</dbReference>
<dbReference type="GO" id="GO:0005737">
    <property type="term" value="C:cytoplasm"/>
    <property type="evidence" value="ECO:0000250"/>
    <property type="project" value="UniProtKB"/>
</dbReference>
<dbReference type="GO" id="GO:0010494">
    <property type="term" value="C:cytoplasmic stress granule"/>
    <property type="evidence" value="ECO:0000250"/>
    <property type="project" value="UniProtKB"/>
</dbReference>
<dbReference type="GO" id="GO:0005829">
    <property type="term" value="C:cytosol"/>
    <property type="evidence" value="ECO:0000266"/>
    <property type="project" value="RGD"/>
</dbReference>
<dbReference type="GO" id="GO:0005634">
    <property type="term" value="C:nucleus"/>
    <property type="evidence" value="ECO:0000250"/>
    <property type="project" value="UniProtKB"/>
</dbReference>
<dbReference type="GO" id="GO:0000932">
    <property type="term" value="C:P-body"/>
    <property type="evidence" value="ECO:0000250"/>
    <property type="project" value="UniProtKB"/>
</dbReference>
<dbReference type="GO" id="GO:1990904">
    <property type="term" value="C:ribonucleoprotein complex"/>
    <property type="evidence" value="ECO:0000250"/>
    <property type="project" value="UniProtKB"/>
</dbReference>
<dbReference type="GO" id="GO:0071889">
    <property type="term" value="F:14-3-3 protein binding"/>
    <property type="evidence" value="ECO:0000250"/>
    <property type="project" value="UniProtKB"/>
</dbReference>
<dbReference type="GO" id="GO:0019957">
    <property type="term" value="F:C-C chemokine binding"/>
    <property type="evidence" value="ECO:0000266"/>
    <property type="project" value="RGD"/>
</dbReference>
<dbReference type="GO" id="GO:0003677">
    <property type="term" value="F:DNA binding"/>
    <property type="evidence" value="ECO:0007669"/>
    <property type="project" value="UniProtKB-KW"/>
</dbReference>
<dbReference type="GO" id="GO:0019899">
    <property type="term" value="F:enzyme binding"/>
    <property type="evidence" value="ECO:0000266"/>
    <property type="project" value="RGD"/>
</dbReference>
<dbReference type="GO" id="GO:0031072">
    <property type="term" value="F:heat shock protein binding"/>
    <property type="evidence" value="ECO:0000250"/>
    <property type="project" value="UniProtKB"/>
</dbReference>
<dbReference type="GO" id="GO:0035925">
    <property type="term" value="F:mRNA 3'-UTR AU-rich region binding"/>
    <property type="evidence" value="ECO:0000250"/>
    <property type="project" value="UniProtKB"/>
</dbReference>
<dbReference type="GO" id="GO:0003730">
    <property type="term" value="F:mRNA 3'-UTR binding"/>
    <property type="evidence" value="ECO:0000314"/>
    <property type="project" value="UniProtKB"/>
</dbReference>
<dbReference type="GO" id="GO:0003729">
    <property type="term" value="F:mRNA binding"/>
    <property type="evidence" value="ECO:0000266"/>
    <property type="project" value="RGD"/>
</dbReference>
<dbReference type="GO" id="GO:0019901">
    <property type="term" value="F:protein kinase binding"/>
    <property type="evidence" value="ECO:0000266"/>
    <property type="project" value="RGD"/>
</dbReference>
<dbReference type="GO" id="GO:0044877">
    <property type="term" value="F:protein-containing complex binding"/>
    <property type="evidence" value="ECO:0000266"/>
    <property type="project" value="RGD"/>
</dbReference>
<dbReference type="GO" id="GO:0160134">
    <property type="term" value="F:protein-RNA sequence-specific adaptor activity"/>
    <property type="evidence" value="ECO:0000266"/>
    <property type="project" value="RGD"/>
</dbReference>
<dbReference type="GO" id="GO:0070063">
    <property type="term" value="F:RNA polymerase binding"/>
    <property type="evidence" value="ECO:0000250"/>
    <property type="project" value="UniProtKB"/>
</dbReference>
<dbReference type="GO" id="GO:0008270">
    <property type="term" value="F:zinc ion binding"/>
    <property type="evidence" value="ECO:0007669"/>
    <property type="project" value="UniProtKB-KW"/>
</dbReference>
<dbReference type="GO" id="GO:0061158">
    <property type="term" value="P:3'-UTR-mediated mRNA destabilization"/>
    <property type="evidence" value="ECO:0000250"/>
    <property type="project" value="UniProtKB"/>
</dbReference>
<dbReference type="GO" id="GO:0070935">
    <property type="term" value="P:3'-UTR-mediated mRNA stabilization"/>
    <property type="evidence" value="ECO:0000250"/>
    <property type="project" value="UniProtKB"/>
</dbReference>
<dbReference type="GO" id="GO:0071364">
    <property type="term" value="P:cellular response to epidermal growth factor stimulus"/>
    <property type="evidence" value="ECO:0000250"/>
    <property type="project" value="UniProtKB"/>
</dbReference>
<dbReference type="GO" id="GO:0044344">
    <property type="term" value="P:cellular response to fibroblast growth factor stimulus"/>
    <property type="evidence" value="ECO:0000250"/>
    <property type="project" value="UniProtKB"/>
</dbReference>
<dbReference type="GO" id="GO:0071385">
    <property type="term" value="P:cellular response to glucocorticoid stimulus"/>
    <property type="evidence" value="ECO:0000250"/>
    <property type="project" value="UniProtKB"/>
</dbReference>
<dbReference type="GO" id="GO:0097011">
    <property type="term" value="P:cellular response to granulocyte macrophage colony-stimulating factor stimulus"/>
    <property type="evidence" value="ECO:0000250"/>
    <property type="project" value="UniProtKB"/>
</dbReference>
<dbReference type="GO" id="GO:0071222">
    <property type="term" value="P:cellular response to lipopolysaccharide"/>
    <property type="evidence" value="ECO:0000250"/>
    <property type="project" value="UniProtKB"/>
</dbReference>
<dbReference type="GO" id="GO:0071356">
    <property type="term" value="P:cellular response to tumor necrosis factor"/>
    <property type="evidence" value="ECO:0000250"/>
    <property type="project" value="UniProtKB"/>
</dbReference>
<dbReference type="GO" id="GO:0060218">
    <property type="term" value="P:hematopoietic stem cell differentiation"/>
    <property type="evidence" value="ECO:0000266"/>
    <property type="project" value="RGD"/>
</dbReference>
<dbReference type="GO" id="GO:0035556">
    <property type="term" value="P:intracellular signal transduction"/>
    <property type="evidence" value="ECO:0000266"/>
    <property type="project" value="RGD"/>
</dbReference>
<dbReference type="GO" id="GO:0000165">
    <property type="term" value="P:MAPK cascade"/>
    <property type="evidence" value="ECO:0000250"/>
    <property type="project" value="UniProtKB"/>
</dbReference>
<dbReference type="GO" id="GO:0035278">
    <property type="term" value="P:miRNA-mediated gene silencing by inhibition of translation"/>
    <property type="evidence" value="ECO:0000250"/>
    <property type="project" value="UniProtKB"/>
</dbReference>
<dbReference type="GO" id="GO:0006402">
    <property type="term" value="P:mRNA catabolic process"/>
    <property type="evidence" value="ECO:0000250"/>
    <property type="project" value="UniProtKB"/>
</dbReference>
<dbReference type="GO" id="GO:0051028">
    <property type="term" value="P:mRNA transport"/>
    <property type="evidence" value="ECO:0000250"/>
    <property type="project" value="UniProtKB"/>
</dbReference>
<dbReference type="GO" id="GO:0030099">
    <property type="term" value="P:myeloid cell differentiation"/>
    <property type="evidence" value="ECO:0000266"/>
    <property type="project" value="RGD"/>
</dbReference>
<dbReference type="GO" id="GO:1905869">
    <property type="term" value="P:negative regulation of 3'-UTR-mediated mRNA stabilization"/>
    <property type="evidence" value="ECO:0000266"/>
    <property type="project" value="RGD"/>
</dbReference>
<dbReference type="GO" id="GO:1900016">
    <property type="term" value="P:negative regulation of cytokine production involved in inflammatory response"/>
    <property type="evidence" value="ECO:0000266"/>
    <property type="project" value="RGD"/>
</dbReference>
<dbReference type="GO" id="GO:0045647">
    <property type="term" value="P:negative regulation of erythrocyte differentiation"/>
    <property type="evidence" value="ECO:0000250"/>
    <property type="project" value="UniProtKB"/>
</dbReference>
<dbReference type="GO" id="GO:1902037">
    <property type="term" value="P:negative regulation of hematopoietic stem cell differentiation"/>
    <property type="evidence" value="ECO:0000266"/>
    <property type="project" value="RGD"/>
</dbReference>
<dbReference type="GO" id="GO:0050728">
    <property type="term" value="P:negative regulation of inflammatory response"/>
    <property type="evidence" value="ECO:0000266"/>
    <property type="project" value="RGD"/>
</dbReference>
<dbReference type="GO" id="GO:0032703">
    <property type="term" value="P:negative regulation of interleukin-2 production"/>
    <property type="evidence" value="ECO:0000250"/>
    <property type="project" value="UniProtKB"/>
</dbReference>
<dbReference type="GO" id="GO:0045638">
    <property type="term" value="P:negative regulation of myeloid cell differentiation"/>
    <property type="evidence" value="ECO:0000266"/>
    <property type="project" value="RGD"/>
</dbReference>
<dbReference type="GO" id="GO:1904246">
    <property type="term" value="P:negative regulation of polynucleotide adenylyltransferase activity"/>
    <property type="evidence" value="ECO:0000250"/>
    <property type="project" value="UniProtKB"/>
</dbReference>
<dbReference type="GO" id="GO:0000122">
    <property type="term" value="P:negative regulation of transcription by RNA polymerase II"/>
    <property type="evidence" value="ECO:0000266"/>
    <property type="project" value="RGD"/>
</dbReference>
<dbReference type="GO" id="GO:0032897">
    <property type="term" value="P:negative regulation of viral transcription"/>
    <property type="evidence" value="ECO:0000250"/>
    <property type="project" value="UniProtKB"/>
</dbReference>
<dbReference type="GO" id="GO:0000288">
    <property type="term" value="P:nuclear-transcribed mRNA catabolic process, deadenylation-dependent decay"/>
    <property type="evidence" value="ECO:0000266"/>
    <property type="project" value="RGD"/>
</dbReference>
<dbReference type="GO" id="GO:0031086">
    <property type="term" value="P:nuclear-transcribed mRNA catabolic process, deadenylation-independent decay"/>
    <property type="evidence" value="ECO:0000250"/>
    <property type="project" value="UniProtKB"/>
</dbReference>
<dbReference type="GO" id="GO:0000289">
    <property type="term" value="P:nuclear-transcribed mRNA poly(A) tail shortening"/>
    <property type="evidence" value="ECO:0000266"/>
    <property type="project" value="RGD"/>
</dbReference>
<dbReference type="GO" id="GO:0038066">
    <property type="term" value="P:p38MAPK cascade"/>
    <property type="evidence" value="ECO:0000250"/>
    <property type="project" value="UniProtKB"/>
</dbReference>
<dbReference type="GO" id="GO:1901835">
    <property type="term" value="P:positive regulation of deadenylation-independent decapping of nuclear-transcribed mRNA"/>
    <property type="evidence" value="ECO:0000250"/>
    <property type="project" value="UniProtKB"/>
</dbReference>
<dbReference type="GO" id="GO:0045600">
    <property type="term" value="P:positive regulation of fat cell differentiation"/>
    <property type="evidence" value="ECO:0000250"/>
    <property type="project" value="UniProtKB"/>
</dbReference>
<dbReference type="GO" id="GO:1904582">
    <property type="term" value="P:positive regulation of intracellular mRNA localization"/>
    <property type="evidence" value="ECO:0000250"/>
    <property type="project" value="UniProtKB"/>
</dbReference>
<dbReference type="GO" id="GO:2000637">
    <property type="term" value="P:positive regulation of miRNA-mediated gene silencing"/>
    <property type="evidence" value="ECO:0000250"/>
    <property type="project" value="UniProtKB"/>
</dbReference>
<dbReference type="GO" id="GO:0061014">
    <property type="term" value="P:positive regulation of mRNA catabolic process"/>
    <property type="evidence" value="ECO:0000250"/>
    <property type="project" value="UniProtKB"/>
</dbReference>
<dbReference type="GO" id="GO:1900153">
    <property type="term" value="P:positive regulation of nuclear-transcribed mRNA catabolic process, deadenylation-dependent decay"/>
    <property type="evidence" value="ECO:0000250"/>
    <property type="project" value="UniProtKB"/>
</dbReference>
<dbReference type="GO" id="GO:0060213">
    <property type="term" value="P:positive regulation of nuclear-transcribed mRNA poly(A) tail shortening"/>
    <property type="evidence" value="ECO:0000250"/>
    <property type="project" value="UniProtKB"/>
</dbReference>
<dbReference type="GO" id="GO:1902172">
    <property type="term" value="P:regulation of keratinocyte apoptotic process"/>
    <property type="evidence" value="ECO:0000250"/>
    <property type="project" value="UniProtKB"/>
</dbReference>
<dbReference type="GO" id="GO:0045616">
    <property type="term" value="P:regulation of keratinocyte differentiation"/>
    <property type="evidence" value="ECO:0000250"/>
    <property type="project" value="UniProtKB"/>
</dbReference>
<dbReference type="GO" id="GO:0010837">
    <property type="term" value="P:regulation of keratinocyte proliferation"/>
    <property type="evidence" value="ECO:0000250"/>
    <property type="project" value="UniProtKB"/>
</dbReference>
<dbReference type="GO" id="GO:0043488">
    <property type="term" value="P:regulation of mRNA stability"/>
    <property type="evidence" value="ECO:0000250"/>
    <property type="project" value="UniProtKB"/>
</dbReference>
<dbReference type="GO" id="GO:0006357">
    <property type="term" value="P:regulation of transcription by RNA polymerase II"/>
    <property type="evidence" value="ECO:0000266"/>
    <property type="project" value="RGD"/>
</dbReference>
<dbReference type="GO" id="GO:0032680">
    <property type="term" value="P:regulation of tumor necrosis factor production"/>
    <property type="evidence" value="ECO:0000250"/>
    <property type="project" value="UniProtKB"/>
</dbReference>
<dbReference type="GO" id="GO:0042594">
    <property type="term" value="P:response to starvation"/>
    <property type="evidence" value="ECO:0000250"/>
    <property type="project" value="UniProtKB"/>
</dbReference>
<dbReference type="GO" id="GO:0009611">
    <property type="term" value="P:response to wounding"/>
    <property type="evidence" value="ECO:0000250"/>
    <property type="project" value="UniProtKB"/>
</dbReference>
<dbReference type="GO" id="GO:0050779">
    <property type="term" value="P:RNA destabilization"/>
    <property type="evidence" value="ECO:0000266"/>
    <property type="project" value="RGD"/>
</dbReference>
<dbReference type="FunFam" id="4.10.1000.10:FF:000001">
    <property type="entry name" value="zinc finger CCCH domain-containing protein 15-like"/>
    <property type="match status" value="1"/>
</dbReference>
<dbReference type="FunFam" id="4.10.1000.10:FF:000002">
    <property type="entry name" value="Zinc finger protein 36, C3H1 type-like 1"/>
    <property type="match status" value="1"/>
</dbReference>
<dbReference type="Gene3D" id="4.10.1000.10">
    <property type="entry name" value="Zinc finger, CCCH-type"/>
    <property type="match status" value="2"/>
</dbReference>
<dbReference type="InterPro" id="IPR045877">
    <property type="entry name" value="ZFP36-like"/>
</dbReference>
<dbReference type="InterPro" id="IPR000571">
    <property type="entry name" value="Znf_CCCH"/>
</dbReference>
<dbReference type="InterPro" id="IPR036855">
    <property type="entry name" value="Znf_CCCH_sf"/>
</dbReference>
<dbReference type="PANTHER" id="PTHR12547">
    <property type="entry name" value="CCCH ZINC FINGER/TIS11-RELATED"/>
    <property type="match status" value="1"/>
</dbReference>
<dbReference type="PANTHER" id="PTHR12547:SF58">
    <property type="entry name" value="MRNA DECAY ACTIVATOR PROTEIN ZFP36"/>
    <property type="match status" value="1"/>
</dbReference>
<dbReference type="Pfam" id="PF00642">
    <property type="entry name" value="zf-CCCH"/>
    <property type="match status" value="2"/>
</dbReference>
<dbReference type="SMART" id="SM00356">
    <property type="entry name" value="ZnF_C3H1"/>
    <property type="match status" value="2"/>
</dbReference>
<dbReference type="SUPFAM" id="SSF90229">
    <property type="entry name" value="CCCH zinc finger"/>
    <property type="match status" value="2"/>
</dbReference>
<dbReference type="PROSITE" id="PS50103">
    <property type="entry name" value="ZF_C3H1"/>
    <property type="match status" value="2"/>
</dbReference>
<protein>
    <recommendedName>
        <fullName evidence="8">mRNA decay activator protein ZFP36</fullName>
    </recommendedName>
    <alternativeName>
        <fullName evidence="1">TPA-induced sequence 11</fullName>
    </alternativeName>
    <alternativeName>
        <fullName evidence="2">Tristetraprolin</fullName>
    </alternativeName>
    <alternativeName>
        <fullName evidence="9">Zinc finger protein 36</fullName>
        <shortName evidence="1">Zfp-36</shortName>
    </alternativeName>
</protein>